<keyword id="KW-0002">3D-structure</keyword>
<keyword id="KW-0496">Mitochondrion</keyword>
<keyword id="KW-1185">Reference proteome</keyword>
<keyword id="KW-0687">Ribonucleoprotein</keyword>
<keyword id="KW-0689">Ribosomal protein</keyword>
<proteinExistence type="evidence at protein level"/>
<reference key="1">
    <citation type="journal article" date="2003" name="Nature">
        <title>The genome sequence of the filamentous fungus Neurospora crassa.</title>
        <authorList>
            <person name="Galagan J.E."/>
            <person name="Calvo S.E."/>
            <person name="Borkovich K.A."/>
            <person name="Selker E.U."/>
            <person name="Read N.D."/>
            <person name="Jaffe D.B."/>
            <person name="FitzHugh W."/>
            <person name="Ma L.-J."/>
            <person name="Smirnov S."/>
            <person name="Purcell S."/>
            <person name="Rehman B."/>
            <person name="Elkins T."/>
            <person name="Engels R."/>
            <person name="Wang S."/>
            <person name="Nielsen C.B."/>
            <person name="Butler J."/>
            <person name="Endrizzi M."/>
            <person name="Qui D."/>
            <person name="Ianakiev P."/>
            <person name="Bell-Pedersen D."/>
            <person name="Nelson M.A."/>
            <person name="Werner-Washburne M."/>
            <person name="Selitrennikoff C.P."/>
            <person name="Kinsey J.A."/>
            <person name="Braun E.L."/>
            <person name="Zelter A."/>
            <person name="Schulte U."/>
            <person name="Kothe G.O."/>
            <person name="Jedd G."/>
            <person name="Mewes H.-W."/>
            <person name="Staben C."/>
            <person name="Marcotte E."/>
            <person name="Greenberg D."/>
            <person name="Roy A."/>
            <person name="Foley K."/>
            <person name="Naylor J."/>
            <person name="Stange-Thomann N."/>
            <person name="Barrett R."/>
            <person name="Gnerre S."/>
            <person name="Kamal M."/>
            <person name="Kamvysselis M."/>
            <person name="Mauceli E.W."/>
            <person name="Bielke C."/>
            <person name="Rudd S."/>
            <person name="Frishman D."/>
            <person name="Krystofova S."/>
            <person name="Rasmussen C."/>
            <person name="Metzenberg R.L."/>
            <person name="Perkins D.D."/>
            <person name="Kroken S."/>
            <person name="Cogoni C."/>
            <person name="Macino G."/>
            <person name="Catcheside D.E.A."/>
            <person name="Li W."/>
            <person name="Pratt R.J."/>
            <person name="Osmani S.A."/>
            <person name="DeSouza C.P.C."/>
            <person name="Glass N.L."/>
            <person name="Orbach M.J."/>
            <person name="Berglund J.A."/>
            <person name="Voelker R."/>
            <person name="Yarden O."/>
            <person name="Plamann M."/>
            <person name="Seiler S."/>
            <person name="Dunlap J.C."/>
            <person name="Radford A."/>
            <person name="Aramayo R."/>
            <person name="Natvig D.O."/>
            <person name="Alex L.A."/>
            <person name="Mannhaupt G."/>
            <person name="Ebbole D.J."/>
            <person name="Freitag M."/>
            <person name="Paulsen I."/>
            <person name="Sachs M.S."/>
            <person name="Lander E.S."/>
            <person name="Nusbaum C."/>
            <person name="Birren B.W."/>
        </authorList>
    </citation>
    <scope>NUCLEOTIDE SEQUENCE [LARGE SCALE GENOMIC DNA]</scope>
    <source>
        <strain>ATCC 24698 / 74-OR23-1A / CBS 708.71 / DSM 1257 / FGSC 987</strain>
    </source>
</reference>
<reference evidence="6 7" key="2">
    <citation type="journal article" date="2020" name="Nat. Commun.">
        <title>Analysis of translating mitoribosome reveals functional characteristics of translation in mitochondria of fungi.</title>
        <authorList>
            <person name="Itoh Y."/>
            <person name="Naschberger A."/>
            <person name="Mortezaei N."/>
            <person name="Herrmann J.M."/>
            <person name="Amunts A."/>
        </authorList>
    </citation>
    <scope>STRUCTURE BY ELECTRON MICROSCOPY (2.85 ANGSTROMS)</scope>
</reference>
<sequence length="108" mass="12143">MSVPRARLLQLVKARCELFSTTFNPEGIRTGNKILRQRLKGPALATYYPRKNVGIRELQKEFGTLGLEVDDEVDDDRLEHLAALRARDKGAPKKKRTAPSAADAKKKK</sequence>
<comment type="function">
    <text evidence="5">Component of the mitochondrial ribosome (mitoribosome), a dedicated translation machinery responsible for the synthesis of mitochondrial genome-encoded proteins, including at least some of the essential transmembrane subunits of the mitochondrial respiratory chain. The mitoribosomes are attached to the mitochondrial inner membrane and translation products are cotranslationally integrated into the membrane.</text>
</comment>
<comment type="subunit">
    <text evidence="2">Component of the mitochondrial small ribosomal subunit (mt-SSU). Mature N.crassa 74S mitochondrial ribosomes consist of a small (37S) and a large (54S) subunit. The 37S small subunit contains a 16S ribosomal RNA (16S mt-rRNA) and 32 different proteins. The 54S large subunit contains a 23S rRNA (23S mt-rRNA) and 42 different proteins.</text>
</comment>
<comment type="subcellular location">
    <subcellularLocation>
        <location evidence="2">Mitochondrion</location>
    </subcellularLocation>
</comment>
<comment type="similarity">
    <text evidence="4">Belongs to the mitochondrion-specific ribosomal protein mS33 family.</text>
</comment>
<gene>
    <name type="primary">rsm27</name>
    <name type="ORF">NCU01761</name>
</gene>
<organism>
    <name type="scientific">Neurospora crassa (strain ATCC 24698 / 74-OR23-1A / CBS 708.71 / DSM 1257 / FGSC 987)</name>
    <dbReference type="NCBI Taxonomy" id="367110"/>
    <lineage>
        <taxon>Eukaryota</taxon>
        <taxon>Fungi</taxon>
        <taxon>Dikarya</taxon>
        <taxon>Ascomycota</taxon>
        <taxon>Pezizomycotina</taxon>
        <taxon>Sordariomycetes</taxon>
        <taxon>Sordariomycetidae</taxon>
        <taxon>Sordariales</taxon>
        <taxon>Sordariaceae</taxon>
        <taxon>Neurospora</taxon>
    </lineage>
</organism>
<accession>Q1K5R0</accession>
<evidence type="ECO:0000256" key="1">
    <source>
        <dbReference type="SAM" id="MobiDB-lite"/>
    </source>
</evidence>
<evidence type="ECO:0000269" key="2">
    <source>
    </source>
</evidence>
<evidence type="ECO:0000303" key="3">
    <source>
    </source>
</evidence>
<evidence type="ECO:0000305" key="4"/>
<evidence type="ECO:0000305" key="5">
    <source>
    </source>
</evidence>
<evidence type="ECO:0007744" key="6">
    <source>
        <dbReference type="PDB" id="6YW5"/>
    </source>
</evidence>
<evidence type="ECO:0007744" key="7">
    <source>
        <dbReference type="PDB" id="6YWX"/>
    </source>
</evidence>
<protein>
    <recommendedName>
        <fullName evidence="3">Small ribosomal subunit protein mS33</fullName>
    </recommendedName>
</protein>
<name>RT27_NEUCR</name>
<feature type="chain" id="PRO_0000458562" description="Small ribosomal subunit protein mS33">
    <location>
        <begin position="1"/>
        <end position="108"/>
    </location>
</feature>
<feature type="region of interest" description="Disordered" evidence="1">
    <location>
        <begin position="84"/>
        <end position="108"/>
    </location>
</feature>
<dbReference type="EMBL" id="CM002237">
    <property type="protein sequence ID" value="EAA27948.2"/>
    <property type="molecule type" value="Genomic_DNA"/>
</dbReference>
<dbReference type="PIR" id="T49433">
    <property type="entry name" value="T49433"/>
</dbReference>
<dbReference type="RefSeq" id="XP_957184.2">
    <property type="nucleotide sequence ID" value="XM_952091.2"/>
</dbReference>
<dbReference type="PDB" id="6YW5">
    <property type="method" value="EM"/>
    <property type="resolution" value="2.85 A"/>
    <property type="chains" value="YY=1-108"/>
</dbReference>
<dbReference type="PDB" id="6YWX">
    <property type="method" value="EM"/>
    <property type="resolution" value="3.10 A"/>
    <property type="chains" value="YY=1-108"/>
</dbReference>
<dbReference type="PDBsum" id="6YW5"/>
<dbReference type="PDBsum" id="6YWX"/>
<dbReference type="EMDB" id="EMD-10958"/>
<dbReference type="EMDB" id="EMD-10978"/>
<dbReference type="SMR" id="Q1K5R0"/>
<dbReference type="FunCoup" id="Q1K5R0">
    <property type="interactions" value="175"/>
</dbReference>
<dbReference type="STRING" id="367110.Q1K5R0"/>
<dbReference type="PaxDb" id="5141-EFNCRP00000001732"/>
<dbReference type="EnsemblFungi" id="EAA27948">
    <property type="protein sequence ID" value="EAA27948"/>
    <property type="gene ID" value="NCU01761"/>
</dbReference>
<dbReference type="GeneID" id="3873336"/>
<dbReference type="KEGG" id="ncr:NCU01761"/>
<dbReference type="VEuPathDB" id="FungiDB:NCU01761"/>
<dbReference type="InParanoid" id="Q1K5R0"/>
<dbReference type="OrthoDB" id="2257454at2759"/>
<dbReference type="Proteomes" id="UP000001805">
    <property type="component" value="Chromosome 6, Linkage Group II"/>
</dbReference>
<dbReference type="GO" id="GO:0005739">
    <property type="term" value="C:mitochondrion"/>
    <property type="evidence" value="ECO:0000318"/>
    <property type="project" value="GO_Central"/>
</dbReference>
<dbReference type="GO" id="GO:1990904">
    <property type="term" value="C:ribonucleoprotein complex"/>
    <property type="evidence" value="ECO:0007669"/>
    <property type="project" value="UniProtKB-KW"/>
</dbReference>
<dbReference type="GO" id="GO:0005840">
    <property type="term" value="C:ribosome"/>
    <property type="evidence" value="ECO:0007669"/>
    <property type="project" value="UniProtKB-KW"/>
</dbReference>
<dbReference type="InterPro" id="IPR013219">
    <property type="entry name" value="Ribosomal_mS33"/>
</dbReference>
<dbReference type="PANTHER" id="PTHR13362">
    <property type="entry name" value="MITOCHONDRIAL RIBOSOMAL PROTEIN S33"/>
    <property type="match status" value="1"/>
</dbReference>
<dbReference type="PANTHER" id="PTHR13362:SF2">
    <property type="entry name" value="SMALL RIBOSOMAL SUBUNIT PROTEIN MS33"/>
    <property type="match status" value="1"/>
</dbReference>
<dbReference type="Pfam" id="PF08293">
    <property type="entry name" value="MRP-S33"/>
    <property type="match status" value="1"/>
</dbReference>